<sequence length="284" mass="31027">MNTFFLSLLSGAAAGTSTDLVFFPIDTIKTRLQAKGGFFANGGYKGIYRGLGSAVVASAPGASLFFISYDYMKVKSRPYISKLYSQGSEQLIDTTTHMLSSSIGEICACLVRVPAEVVKQRTQVHSTNSSWQTLQSILRNDNKEGLRKNLYRGWSTTIMREIPFTCIQFPLYEYLKKTWAKANGQSQVEPWKGAICGSIAGGIAAATTTPLDFLKTRLMLNKTTASLGSVIIRIYREEGPAVFFSGVGPRTMWISAGGAIFLGMYETVHSLLSKSFPTAGEMRA</sequence>
<accession>P38921</accession>
<accession>D6W1H4</accession>
<proteinExistence type="evidence at protein level"/>
<evidence type="ECO:0000255" key="1"/>
<evidence type="ECO:0000269" key="2">
    <source>
    </source>
</evidence>
<evidence type="ECO:0000305" key="3"/>
<keyword id="KW-0472">Membrane</keyword>
<keyword id="KW-0496">Mitochondrion</keyword>
<keyword id="KW-0999">Mitochondrion inner membrane</keyword>
<keyword id="KW-1185">Reference proteome</keyword>
<keyword id="KW-0677">Repeat</keyword>
<keyword id="KW-0812">Transmembrane</keyword>
<keyword id="KW-1133">Transmembrane helix</keyword>
<keyword id="KW-0813">Transport</keyword>
<protein>
    <recommendedName>
        <fullName>Putative mitochondrial carrier protein PET8</fullName>
    </recommendedName>
</protein>
<reference key="1">
    <citation type="journal article" date="1993" name="C. R. Acad. Sci. III, Sci. Vie">
        <title>Two yeast chromosomes are related by a fossil duplication of their centromeric regions.</title>
        <authorList>
            <person name="Lalo D."/>
            <person name="Stettler S."/>
            <person name="Mariotte S."/>
            <person name="Slonimski P.P."/>
            <person name="Thuriaux P."/>
        </authorList>
    </citation>
    <scope>NUCLEOTIDE SEQUENCE [GENOMIC DNA]</scope>
    <source>
        <strain>S288c / GRF88</strain>
    </source>
</reference>
<reference key="2">
    <citation type="journal article" date="1994" name="Yeast">
        <title>Organization of the centromeric region of chromosome XIV in Saccharomyces cerevisiae.</title>
        <authorList>
            <person name="Lalo D."/>
            <person name="Stettler S."/>
            <person name="Mariotte S."/>
            <person name="Gendreau E."/>
            <person name="Thuriaux P."/>
        </authorList>
    </citation>
    <scope>NUCLEOTIDE SEQUENCE [GENOMIC DNA]</scope>
    <source>
        <strain>S288c / GRF88</strain>
    </source>
</reference>
<reference key="3">
    <citation type="journal article" date="1994" name="Yeast">
        <title>Nucleotide sequence analysis of an 8887 bp region of the left arm of yeast chromosome XIV, encompassing the centromere sequence.</title>
        <authorList>
            <person name="Verhasselt P."/>
            <person name="Aert R."/>
            <person name="Voet M."/>
            <person name="Volckaert G."/>
        </authorList>
    </citation>
    <scope>NUCLEOTIDE SEQUENCE [GENOMIC DNA]</scope>
    <source>
        <strain>ATCC 96604 / S288c / FY1679</strain>
    </source>
</reference>
<reference key="4">
    <citation type="journal article" date="1997" name="Nature">
        <title>The nucleotide sequence of Saccharomyces cerevisiae chromosome XIV and its evolutionary implications.</title>
        <authorList>
            <person name="Philippsen P."/>
            <person name="Kleine K."/>
            <person name="Poehlmann R."/>
            <person name="Duesterhoeft A."/>
            <person name="Hamberg K."/>
            <person name="Hegemann J.H."/>
            <person name="Obermaier B."/>
            <person name="Urrestarazu L.A."/>
            <person name="Aert R."/>
            <person name="Albermann K."/>
            <person name="Altmann R."/>
            <person name="Andre B."/>
            <person name="Baladron V."/>
            <person name="Ballesta J.P.G."/>
            <person name="Becam A.-M."/>
            <person name="Beinhauer J.D."/>
            <person name="Boskovic J."/>
            <person name="Buitrago M.J."/>
            <person name="Bussereau F."/>
            <person name="Coster F."/>
            <person name="Crouzet M."/>
            <person name="D'Angelo M."/>
            <person name="Dal Pero F."/>
            <person name="De Antoni A."/>
            <person name="del Rey F."/>
            <person name="Doignon F."/>
            <person name="Domdey H."/>
            <person name="Dubois E."/>
            <person name="Fiedler T.A."/>
            <person name="Fleig U."/>
            <person name="Floeth M."/>
            <person name="Fritz C."/>
            <person name="Gaillardin C."/>
            <person name="Garcia-Cantalejo J.M."/>
            <person name="Glansdorff N."/>
            <person name="Goffeau A."/>
            <person name="Gueldener U."/>
            <person name="Herbert C.J."/>
            <person name="Heumann K."/>
            <person name="Heuss-Neitzel D."/>
            <person name="Hilbert H."/>
            <person name="Hinni K."/>
            <person name="Iraqui Houssaini I."/>
            <person name="Jacquet M."/>
            <person name="Jimenez A."/>
            <person name="Jonniaux J.-L."/>
            <person name="Karpfinger-Hartl L."/>
            <person name="Lanfranchi G."/>
            <person name="Lepingle A."/>
            <person name="Levesque H."/>
            <person name="Lyck R."/>
            <person name="Maftahi M."/>
            <person name="Mallet L."/>
            <person name="Maurer C.T.C."/>
            <person name="Messenguy F."/>
            <person name="Mewes H.-W."/>
            <person name="Moestl D."/>
            <person name="Nasr F."/>
            <person name="Nicaud J.-M."/>
            <person name="Niedenthal R.K."/>
            <person name="Pandolfo D."/>
            <person name="Pierard A."/>
            <person name="Piravandi E."/>
            <person name="Planta R.J."/>
            <person name="Pohl T.M."/>
            <person name="Purnelle B."/>
            <person name="Rebischung C."/>
            <person name="Remacha M.A."/>
            <person name="Revuelta J.L."/>
            <person name="Rinke M."/>
            <person name="Saiz J.E."/>
            <person name="Sartorello F."/>
            <person name="Scherens B."/>
            <person name="Sen-Gupta M."/>
            <person name="Soler-Mira A."/>
            <person name="Urbanus J.H.M."/>
            <person name="Valle G."/>
            <person name="Van Dyck L."/>
            <person name="Verhasselt P."/>
            <person name="Vierendeels F."/>
            <person name="Vissers S."/>
            <person name="Voet M."/>
            <person name="Volckaert G."/>
            <person name="Wach A."/>
            <person name="Wambutt R."/>
            <person name="Wedler H."/>
            <person name="Zollner A."/>
            <person name="Hani J."/>
        </authorList>
    </citation>
    <scope>NUCLEOTIDE SEQUENCE [LARGE SCALE GENOMIC DNA]</scope>
    <source>
        <strain>ATCC 204508 / S288c</strain>
    </source>
</reference>
<reference key="5">
    <citation type="journal article" date="2014" name="G3 (Bethesda)">
        <title>The reference genome sequence of Saccharomyces cerevisiae: Then and now.</title>
        <authorList>
            <person name="Engel S.R."/>
            <person name="Dietrich F.S."/>
            <person name="Fisk D.G."/>
            <person name="Binkley G."/>
            <person name="Balakrishnan R."/>
            <person name="Costanzo M.C."/>
            <person name="Dwight S.S."/>
            <person name="Hitz B.C."/>
            <person name="Karra K."/>
            <person name="Nash R.S."/>
            <person name="Weng S."/>
            <person name="Wong E.D."/>
            <person name="Lloyd P."/>
            <person name="Skrzypek M.S."/>
            <person name="Miyasato S.R."/>
            <person name="Simison M."/>
            <person name="Cherry J.M."/>
        </authorList>
    </citation>
    <scope>GENOME REANNOTATION</scope>
    <source>
        <strain>ATCC 204508 / S288c</strain>
    </source>
</reference>
<reference key="6">
    <citation type="journal article" date="2003" name="Nature">
        <title>Global analysis of protein expression in yeast.</title>
        <authorList>
            <person name="Ghaemmaghami S."/>
            <person name="Huh W.-K."/>
            <person name="Bower K."/>
            <person name="Howson R.W."/>
            <person name="Belle A."/>
            <person name="Dephoure N."/>
            <person name="O'Shea E.K."/>
            <person name="Weissman J.S."/>
        </authorList>
    </citation>
    <scope>LEVEL OF PROTEIN EXPRESSION [LARGE SCALE ANALYSIS]</scope>
</reference>
<feature type="chain" id="PRO_0000090686" description="Putative mitochondrial carrier protein PET8">
    <location>
        <begin position="1"/>
        <end position="284"/>
    </location>
</feature>
<feature type="transmembrane region" description="Helical; Name=1" evidence="1">
    <location>
        <begin position="5"/>
        <end position="25"/>
    </location>
</feature>
<feature type="transmembrane region" description="Helical; Name=2" evidence="1">
    <location>
        <begin position="50"/>
        <end position="70"/>
    </location>
</feature>
<feature type="transmembrane region" description="Helical; Name=3" evidence="1">
    <location>
        <begin position="98"/>
        <end position="118"/>
    </location>
</feature>
<feature type="transmembrane region" description="Helical; Name=4" evidence="1">
    <location>
        <begin position="153"/>
        <end position="169"/>
    </location>
</feature>
<feature type="transmembrane region" description="Helical; Name=5" evidence="1">
    <location>
        <begin position="194"/>
        <end position="214"/>
    </location>
</feature>
<feature type="transmembrane region" description="Helical; Name=6" evidence="1">
    <location>
        <begin position="252"/>
        <end position="272"/>
    </location>
</feature>
<feature type="repeat" description="Solcar 1">
    <location>
        <begin position="2"/>
        <end position="75"/>
    </location>
</feature>
<feature type="repeat" description="Solcar 2">
    <location>
        <begin position="92"/>
        <end position="178"/>
    </location>
</feature>
<feature type="repeat" description="Solcar 3">
    <location>
        <begin position="192"/>
        <end position="271"/>
    </location>
</feature>
<comment type="subcellular location">
    <subcellularLocation>
        <location evidence="3">Mitochondrion inner membrane</location>
        <topology evidence="3">Multi-pass membrane protein</topology>
    </subcellularLocation>
</comment>
<comment type="miscellaneous">
    <text evidence="2">Present with 521 molecules/cell in log phase SD medium.</text>
</comment>
<comment type="similarity">
    <text evidence="3">Belongs to the mitochondrial carrier (TC 2.A.29) family.</text>
</comment>
<gene>
    <name type="primary">PET8</name>
    <name type="ordered locus">YNL003C</name>
    <name type="ORF">N2012</name>
</gene>
<organism>
    <name type="scientific">Saccharomyces cerevisiae (strain ATCC 204508 / S288c)</name>
    <name type="common">Baker's yeast</name>
    <dbReference type="NCBI Taxonomy" id="559292"/>
    <lineage>
        <taxon>Eukaryota</taxon>
        <taxon>Fungi</taxon>
        <taxon>Dikarya</taxon>
        <taxon>Ascomycota</taxon>
        <taxon>Saccharomycotina</taxon>
        <taxon>Saccharomycetes</taxon>
        <taxon>Saccharomycetales</taxon>
        <taxon>Saccharomycetaceae</taxon>
        <taxon>Saccharomyces</taxon>
    </lineage>
</organism>
<name>PET8_YEAST</name>
<dbReference type="EMBL" id="U02536">
    <property type="protein sequence ID" value="AAA64802.1"/>
    <property type="molecule type" value="Genomic_DNA"/>
</dbReference>
<dbReference type="EMBL" id="X77114">
    <property type="protein sequence ID" value="CAA54377.1"/>
    <property type="molecule type" value="Genomic_DNA"/>
</dbReference>
<dbReference type="EMBL" id="Z71279">
    <property type="protein sequence ID" value="CAA95862.1"/>
    <property type="molecule type" value="Genomic_DNA"/>
</dbReference>
<dbReference type="EMBL" id="BK006947">
    <property type="protein sequence ID" value="DAA10540.1"/>
    <property type="molecule type" value="Genomic_DNA"/>
</dbReference>
<dbReference type="PIR" id="S45458">
    <property type="entry name" value="S45458"/>
</dbReference>
<dbReference type="RefSeq" id="NP_014395.3">
    <property type="nucleotide sequence ID" value="NM_001182842.3"/>
</dbReference>
<dbReference type="SMR" id="P38921"/>
<dbReference type="BioGRID" id="35822">
    <property type="interactions" value="460"/>
</dbReference>
<dbReference type="DIP" id="DIP-2944N"/>
<dbReference type="FunCoup" id="P38921">
    <property type="interactions" value="879"/>
</dbReference>
<dbReference type="IntAct" id="P38921">
    <property type="interactions" value="7"/>
</dbReference>
<dbReference type="MINT" id="P38921"/>
<dbReference type="STRING" id="4932.YNL003C"/>
<dbReference type="TCDB" id="2.A.29.18.1">
    <property type="family name" value="the mitochondrial carrier (mc) family"/>
</dbReference>
<dbReference type="PaxDb" id="4932-YNL003C"/>
<dbReference type="PeptideAtlas" id="P38921"/>
<dbReference type="EnsemblFungi" id="YNL003C_mRNA">
    <property type="protein sequence ID" value="YNL003C"/>
    <property type="gene ID" value="YNL003C"/>
</dbReference>
<dbReference type="GeneID" id="855729"/>
<dbReference type="KEGG" id="sce:YNL003C"/>
<dbReference type="AGR" id="SGD:S000004948"/>
<dbReference type="SGD" id="S000004948">
    <property type="gene designation" value="PET8"/>
</dbReference>
<dbReference type="VEuPathDB" id="FungiDB:YNL003C"/>
<dbReference type="eggNOG" id="KOG0768">
    <property type="taxonomic scope" value="Eukaryota"/>
</dbReference>
<dbReference type="GeneTree" id="ENSGT00550000074950"/>
<dbReference type="HOGENOM" id="CLU_015166_3_0_1"/>
<dbReference type="InParanoid" id="P38921"/>
<dbReference type="OMA" id="IGPRTMW"/>
<dbReference type="OrthoDB" id="276989at2759"/>
<dbReference type="BioCyc" id="YEAST:G3O-33045-MONOMER"/>
<dbReference type="Reactome" id="R-SCE-425393">
    <property type="pathway name" value="Transport of inorganic cations/anions and amino acids/oligopeptides"/>
</dbReference>
<dbReference type="BioGRID-ORCS" id="855729">
    <property type="hits" value="10 hits in 10 CRISPR screens"/>
</dbReference>
<dbReference type="PRO" id="PR:P38921"/>
<dbReference type="Proteomes" id="UP000002311">
    <property type="component" value="Chromosome XIV"/>
</dbReference>
<dbReference type="RNAct" id="P38921">
    <property type="molecule type" value="protein"/>
</dbReference>
<dbReference type="GO" id="GO:0005743">
    <property type="term" value="C:mitochondrial inner membrane"/>
    <property type="evidence" value="ECO:0000318"/>
    <property type="project" value="GO_Central"/>
</dbReference>
<dbReference type="GO" id="GO:0005739">
    <property type="term" value="C:mitochondrion"/>
    <property type="evidence" value="ECO:0000314"/>
    <property type="project" value="SGD"/>
</dbReference>
<dbReference type="GO" id="GO:0000095">
    <property type="term" value="F:S-adenosyl-L-methionine transmembrane transporter activity"/>
    <property type="evidence" value="ECO:0000314"/>
    <property type="project" value="SGD"/>
</dbReference>
<dbReference type="GO" id="GO:0015805">
    <property type="term" value="P:S-adenosyl-L-methionine transport"/>
    <property type="evidence" value="ECO:0000314"/>
    <property type="project" value="SGD"/>
</dbReference>
<dbReference type="FunFam" id="1.50.40.10:FF:000018">
    <property type="entry name" value="S-adenosylmethionine mitochondrial carrier protein-like"/>
    <property type="match status" value="1"/>
</dbReference>
<dbReference type="Gene3D" id="1.50.40.10">
    <property type="entry name" value="Mitochondrial carrier domain"/>
    <property type="match status" value="1"/>
</dbReference>
<dbReference type="InterPro" id="IPR018108">
    <property type="entry name" value="Mitochondrial_sb/sol_carrier"/>
</dbReference>
<dbReference type="InterPro" id="IPR023395">
    <property type="entry name" value="Mt_carrier_dom_sf"/>
</dbReference>
<dbReference type="PANTHER" id="PTHR45667">
    <property type="entry name" value="S-ADENOSYLMETHIONINE MITOCHONDRIAL CARRIER PROTEIN"/>
    <property type="match status" value="1"/>
</dbReference>
<dbReference type="Pfam" id="PF00153">
    <property type="entry name" value="Mito_carr"/>
    <property type="match status" value="3"/>
</dbReference>
<dbReference type="SUPFAM" id="SSF103506">
    <property type="entry name" value="Mitochondrial carrier"/>
    <property type="match status" value="1"/>
</dbReference>
<dbReference type="PROSITE" id="PS50920">
    <property type="entry name" value="SOLCAR"/>
    <property type="match status" value="3"/>
</dbReference>